<keyword id="KW-0963">Cytoplasm</keyword>
<keyword id="KW-0597">Phosphoprotein</keyword>
<keyword id="KW-1185">Reference proteome</keyword>
<dbReference type="EMBL" id="AE017143">
    <property type="protein sequence ID" value="AAP96077.1"/>
    <property type="status" value="ALT_INIT"/>
    <property type="molecule type" value="Genomic_DNA"/>
</dbReference>
<dbReference type="RefSeq" id="WP_041603490.1">
    <property type="nucleotide sequence ID" value="NC_002940.2"/>
</dbReference>
<dbReference type="SMR" id="Q7VLZ2"/>
<dbReference type="STRING" id="233412.HD_1241"/>
<dbReference type="KEGG" id="hdu:HD_1241"/>
<dbReference type="eggNOG" id="COG3052">
    <property type="taxonomic scope" value="Bacteria"/>
</dbReference>
<dbReference type="HOGENOM" id="CLU_158489_0_0_6"/>
<dbReference type="OrthoDB" id="9798736at2"/>
<dbReference type="Proteomes" id="UP000001022">
    <property type="component" value="Chromosome"/>
</dbReference>
<dbReference type="GO" id="GO:0005737">
    <property type="term" value="C:cytoplasm"/>
    <property type="evidence" value="ECO:0007669"/>
    <property type="project" value="UniProtKB-SubCell"/>
</dbReference>
<dbReference type="HAMAP" id="MF_00805">
    <property type="entry name" value="CitD"/>
    <property type="match status" value="1"/>
</dbReference>
<dbReference type="InterPro" id="IPR006495">
    <property type="entry name" value="CitD"/>
</dbReference>
<dbReference type="InterPro" id="IPR023439">
    <property type="entry name" value="Mal_deCO2ase/Cit_lyase_ACP"/>
</dbReference>
<dbReference type="NCBIfam" id="TIGR01608">
    <property type="entry name" value="citD"/>
    <property type="match status" value="1"/>
</dbReference>
<dbReference type="NCBIfam" id="NF009726">
    <property type="entry name" value="PRK13253.1"/>
    <property type="match status" value="1"/>
</dbReference>
<dbReference type="Pfam" id="PF06857">
    <property type="entry name" value="ACP"/>
    <property type="match status" value="1"/>
</dbReference>
<dbReference type="PIRSF" id="PIRSF002736">
    <property type="entry name" value="Citrt_lyas_gamma"/>
    <property type="match status" value="1"/>
</dbReference>
<protein>
    <recommendedName>
        <fullName evidence="1">Citrate lyase acyl carrier protein</fullName>
    </recommendedName>
    <alternativeName>
        <fullName evidence="1">Citrate lyase gamma chain</fullName>
    </alternativeName>
</protein>
<gene>
    <name evidence="1" type="primary">citD</name>
    <name type="ordered locus">HD_1241</name>
</gene>
<feature type="chain" id="PRO_0000214699" description="Citrate lyase acyl carrier protein">
    <location>
        <begin position="1"/>
        <end position="95"/>
    </location>
</feature>
<feature type="modified residue" description="O-(phosphoribosyl dephospho-coenzyme A)serine" evidence="1">
    <location>
        <position position="14"/>
    </location>
</feature>
<comment type="function">
    <text evidence="1">Covalent carrier of the coenzyme of citrate lyase.</text>
</comment>
<comment type="subunit">
    <text evidence="1">Oligomer with a subunit composition of (alpha,beta,gamma)6.</text>
</comment>
<comment type="subcellular location">
    <subcellularLocation>
        <location evidence="1">Cytoplasm</location>
    </subcellularLocation>
</comment>
<comment type="similarity">
    <text evidence="1">Belongs to the CitD family.</text>
</comment>
<comment type="sequence caution" evidence="2">
    <conflict type="erroneous initiation">
        <sequence resource="EMBL-CDS" id="AAP96077"/>
    </conflict>
</comment>
<sequence>MQITKTAVAGTLESSDVQIRIAPSTTMDIEINSSVAKQFGEDILNSVTAVLAQFEVSSAQIIIEDKGALDCVLRARLKAALLRATDEALAWEKIL</sequence>
<evidence type="ECO:0000255" key="1">
    <source>
        <dbReference type="HAMAP-Rule" id="MF_00805"/>
    </source>
</evidence>
<evidence type="ECO:0000305" key="2"/>
<reference key="1">
    <citation type="submission" date="2003-06" db="EMBL/GenBank/DDBJ databases">
        <title>The complete genome sequence of Haemophilus ducreyi.</title>
        <authorList>
            <person name="Munson R.S. Jr."/>
            <person name="Ray W.C."/>
            <person name="Mahairas G."/>
            <person name="Sabo P."/>
            <person name="Mungur R."/>
            <person name="Johnson L."/>
            <person name="Nguyen D."/>
            <person name="Wang J."/>
            <person name="Forst C."/>
            <person name="Hood L."/>
        </authorList>
    </citation>
    <scope>NUCLEOTIDE SEQUENCE [LARGE SCALE GENOMIC DNA]</scope>
    <source>
        <strain>35000HP / ATCC 700724</strain>
    </source>
</reference>
<organism>
    <name type="scientific">Haemophilus ducreyi (strain 35000HP / ATCC 700724)</name>
    <dbReference type="NCBI Taxonomy" id="233412"/>
    <lineage>
        <taxon>Bacteria</taxon>
        <taxon>Pseudomonadati</taxon>
        <taxon>Pseudomonadota</taxon>
        <taxon>Gammaproteobacteria</taxon>
        <taxon>Pasteurellales</taxon>
        <taxon>Pasteurellaceae</taxon>
        <taxon>Haemophilus</taxon>
    </lineage>
</organism>
<name>CITD_HAEDU</name>
<accession>Q7VLZ2</accession>
<proteinExistence type="inferred from homology"/>